<organism>
    <name type="scientific">Schizosaccharomyces pombe (strain 972 / ATCC 24843)</name>
    <name type="common">Fission yeast</name>
    <dbReference type="NCBI Taxonomy" id="284812"/>
    <lineage>
        <taxon>Eukaryota</taxon>
        <taxon>Fungi</taxon>
        <taxon>Dikarya</taxon>
        <taxon>Ascomycota</taxon>
        <taxon>Taphrinomycotina</taxon>
        <taxon>Schizosaccharomycetes</taxon>
        <taxon>Schizosaccharomycetales</taxon>
        <taxon>Schizosaccharomycetaceae</taxon>
        <taxon>Schizosaccharomyces</taxon>
    </lineage>
</organism>
<protein>
    <recommendedName>
        <fullName>Uncharacterized protein C14C8.11c</fullName>
    </recommendedName>
</protein>
<proteinExistence type="predicted"/>
<sequence length="159" mass="17653">MQFDDIITKILKVGIISILFIINMAKNAVNSHFGIRTPRSVCHVRNRENIYLYWTTFDAHKLPNGGNADMAHFSANCLHAGHTVKFVSADRLGSTTWECNIKFGILSFPNFGKDDAAQNCFAEPSMKSISADTQHISAREYISGTSKGFKTATPKLLNI</sequence>
<gene>
    <name type="ORF">SPBC14C8.11c</name>
</gene>
<accession>O60092</accession>
<feature type="chain" id="PRO_0000304115" description="Uncharacterized protein C14C8.11c">
    <location>
        <begin position="1"/>
        <end position="159"/>
    </location>
</feature>
<dbReference type="EMBL" id="CU329671">
    <property type="protein sequence ID" value="CAA18429.2"/>
    <property type="molecule type" value="Genomic_DNA"/>
</dbReference>
<dbReference type="PIR" id="T39439">
    <property type="entry name" value="T39439"/>
</dbReference>
<dbReference type="RefSeq" id="NP_595914.2">
    <property type="nucleotide sequence ID" value="NM_001021822.2"/>
</dbReference>
<dbReference type="BioGRID" id="276363">
    <property type="interactions" value="2"/>
</dbReference>
<dbReference type="PaxDb" id="4896-SPBC14C8.11c.1"/>
<dbReference type="EnsemblFungi" id="SPBC14C8.11c.1">
    <property type="protein sequence ID" value="SPBC14C8.11c.1:pep"/>
    <property type="gene ID" value="SPBC14C8.11c"/>
</dbReference>
<dbReference type="KEGG" id="spo:2539813"/>
<dbReference type="PomBase" id="SPBC14C8.11c"/>
<dbReference type="VEuPathDB" id="FungiDB:SPBC14C8.11c"/>
<dbReference type="HOGENOM" id="CLU_1661815_0_0_1"/>
<dbReference type="InParanoid" id="O60092"/>
<dbReference type="PRO" id="PR:O60092"/>
<dbReference type="Proteomes" id="UP000002485">
    <property type="component" value="Chromosome II"/>
</dbReference>
<reference key="1">
    <citation type="journal article" date="2002" name="Nature">
        <title>The genome sequence of Schizosaccharomyces pombe.</title>
        <authorList>
            <person name="Wood V."/>
            <person name="Gwilliam R."/>
            <person name="Rajandream M.A."/>
            <person name="Lyne M.H."/>
            <person name="Lyne R."/>
            <person name="Stewart A."/>
            <person name="Sgouros J.G."/>
            <person name="Peat N."/>
            <person name="Hayles J."/>
            <person name="Baker S.G."/>
            <person name="Basham D."/>
            <person name="Bowman S."/>
            <person name="Brooks K."/>
            <person name="Brown D."/>
            <person name="Brown S."/>
            <person name="Chillingworth T."/>
            <person name="Churcher C.M."/>
            <person name="Collins M."/>
            <person name="Connor R."/>
            <person name="Cronin A."/>
            <person name="Davis P."/>
            <person name="Feltwell T."/>
            <person name="Fraser A."/>
            <person name="Gentles S."/>
            <person name="Goble A."/>
            <person name="Hamlin N."/>
            <person name="Harris D.E."/>
            <person name="Hidalgo J."/>
            <person name="Hodgson G."/>
            <person name="Holroyd S."/>
            <person name="Hornsby T."/>
            <person name="Howarth S."/>
            <person name="Huckle E.J."/>
            <person name="Hunt S."/>
            <person name="Jagels K."/>
            <person name="James K.D."/>
            <person name="Jones L."/>
            <person name="Jones M."/>
            <person name="Leather S."/>
            <person name="McDonald S."/>
            <person name="McLean J."/>
            <person name="Mooney P."/>
            <person name="Moule S."/>
            <person name="Mungall K.L."/>
            <person name="Murphy L.D."/>
            <person name="Niblett D."/>
            <person name="Odell C."/>
            <person name="Oliver K."/>
            <person name="O'Neil S."/>
            <person name="Pearson D."/>
            <person name="Quail M.A."/>
            <person name="Rabbinowitsch E."/>
            <person name="Rutherford K.M."/>
            <person name="Rutter S."/>
            <person name="Saunders D."/>
            <person name="Seeger K."/>
            <person name="Sharp S."/>
            <person name="Skelton J."/>
            <person name="Simmonds M.N."/>
            <person name="Squares R."/>
            <person name="Squares S."/>
            <person name="Stevens K."/>
            <person name="Taylor K."/>
            <person name="Taylor R.G."/>
            <person name="Tivey A."/>
            <person name="Walsh S.V."/>
            <person name="Warren T."/>
            <person name="Whitehead S."/>
            <person name="Woodward J.R."/>
            <person name="Volckaert G."/>
            <person name="Aert R."/>
            <person name="Robben J."/>
            <person name="Grymonprez B."/>
            <person name="Weltjens I."/>
            <person name="Vanstreels E."/>
            <person name="Rieger M."/>
            <person name="Schaefer M."/>
            <person name="Mueller-Auer S."/>
            <person name="Gabel C."/>
            <person name="Fuchs M."/>
            <person name="Duesterhoeft A."/>
            <person name="Fritzc C."/>
            <person name="Holzer E."/>
            <person name="Moestl D."/>
            <person name="Hilbert H."/>
            <person name="Borzym K."/>
            <person name="Langer I."/>
            <person name="Beck A."/>
            <person name="Lehrach H."/>
            <person name="Reinhardt R."/>
            <person name="Pohl T.M."/>
            <person name="Eger P."/>
            <person name="Zimmermann W."/>
            <person name="Wedler H."/>
            <person name="Wambutt R."/>
            <person name="Purnelle B."/>
            <person name="Goffeau A."/>
            <person name="Cadieu E."/>
            <person name="Dreano S."/>
            <person name="Gloux S."/>
            <person name="Lelaure V."/>
            <person name="Mottier S."/>
            <person name="Galibert F."/>
            <person name="Aves S.J."/>
            <person name="Xiang Z."/>
            <person name="Hunt C."/>
            <person name="Moore K."/>
            <person name="Hurst S.M."/>
            <person name="Lucas M."/>
            <person name="Rochet M."/>
            <person name="Gaillardin C."/>
            <person name="Tallada V.A."/>
            <person name="Garzon A."/>
            <person name="Thode G."/>
            <person name="Daga R.R."/>
            <person name="Cruzado L."/>
            <person name="Jimenez J."/>
            <person name="Sanchez M."/>
            <person name="del Rey F."/>
            <person name="Benito J."/>
            <person name="Dominguez A."/>
            <person name="Revuelta J.L."/>
            <person name="Moreno S."/>
            <person name="Armstrong J."/>
            <person name="Forsburg S.L."/>
            <person name="Cerutti L."/>
            <person name="Lowe T."/>
            <person name="McCombie W.R."/>
            <person name="Paulsen I."/>
            <person name="Potashkin J."/>
            <person name="Shpakovski G.V."/>
            <person name="Ussery D."/>
            <person name="Barrell B.G."/>
            <person name="Nurse P."/>
        </authorList>
    </citation>
    <scope>NUCLEOTIDE SEQUENCE [LARGE SCALE GENOMIC DNA]</scope>
    <source>
        <strain>972 / ATCC 24843</strain>
    </source>
</reference>
<reference key="2">
    <citation type="journal article" date="2011" name="Science">
        <title>Comparative functional genomics of the fission yeasts.</title>
        <authorList>
            <person name="Rhind N."/>
            <person name="Chen Z."/>
            <person name="Yassour M."/>
            <person name="Thompson D.A."/>
            <person name="Haas B.J."/>
            <person name="Habib N."/>
            <person name="Wapinski I."/>
            <person name="Roy S."/>
            <person name="Lin M.F."/>
            <person name="Heiman D.I."/>
            <person name="Young S.K."/>
            <person name="Furuya K."/>
            <person name="Guo Y."/>
            <person name="Pidoux A."/>
            <person name="Chen H.M."/>
            <person name="Robbertse B."/>
            <person name="Goldberg J.M."/>
            <person name="Aoki K."/>
            <person name="Bayne E.H."/>
            <person name="Berlin A.M."/>
            <person name="Desjardins C.A."/>
            <person name="Dobbs E."/>
            <person name="Dukaj L."/>
            <person name="Fan L."/>
            <person name="FitzGerald M.G."/>
            <person name="French C."/>
            <person name="Gujja S."/>
            <person name="Hansen K."/>
            <person name="Keifenheim D."/>
            <person name="Levin J.Z."/>
            <person name="Mosher R.A."/>
            <person name="Mueller C.A."/>
            <person name="Pfiffner J."/>
            <person name="Priest M."/>
            <person name="Russ C."/>
            <person name="Smialowska A."/>
            <person name="Swoboda P."/>
            <person name="Sykes S.M."/>
            <person name="Vaughn M."/>
            <person name="Vengrova S."/>
            <person name="Yoder R."/>
            <person name="Zeng Q."/>
            <person name="Allshire R."/>
            <person name="Baulcombe D."/>
            <person name="Birren B.W."/>
            <person name="Brown W."/>
            <person name="Ekwall K."/>
            <person name="Kellis M."/>
            <person name="Leatherwood J."/>
            <person name="Levin H."/>
            <person name="Margalit H."/>
            <person name="Martienssen R."/>
            <person name="Nieduszynski C.A."/>
            <person name="Spatafora J.W."/>
            <person name="Friedman N."/>
            <person name="Dalgaard J.Z."/>
            <person name="Baumann P."/>
            <person name="Niki H."/>
            <person name="Regev A."/>
            <person name="Nusbaum C."/>
        </authorList>
    </citation>
    <scope>REVISION OF GENE MODEL</scope>
</reference>
<name>YO2B_SCHPO</name>
<keyword id="KW-1185">Reference proteome</keyword>